<proteinExistence type="inferred from homology"/>
<protein>
    <recommendedName>
        <fullName>Head virion protein G6P</fullName>
    </recommendedName>
    <alternativeName>
        <fullName>Coat protein D</fullName>
    </alternativeName>
    <alternativeName>
        <fullName>G6P</fullName>
    </alternativeName>
</protein>
<feature type="chain" id="PRO_0000098189" description="Head virion protein G6P">
    <location>
        <begin position="1"/>
        <end position="112"/>
    </location>
</feature>
<feature type="transmembrane region" description="Helical" evidence="2">
    <location>
        <begin position="3"/>
        <end position="23"/>
    </location>
</feature>
<feature type="transmembrane region" description="Helical" evidence="2">
    <location>
        <begin position="36"/>
        <end position="56"/>
    </location>
</feature>
<feature type="transmembrane region" description="Helical" evidence="2">
    <location>
        <begin position="80"/>
        <end position="100"/>
    </location>
</feature>
<reference key="1">
    <citation type="journal article" date="1978" name="Nucleic Acids Res.">
        <title>Nucleotide sequence of bacteriophage fd DNA.</title>
        <authorList>
            <person name="Beck E."/>
            <person name="Sommer R."/>
            <person name="Auerswald E.A."/>
            <person name="Kurz C."/>
            <person name="Zink B."/>
            <person name="Osterburg G."/>
            <person name="Schaller H."/>
            <person name="Sugimoto K."/>
            <person name="Sugisaki H."/>
            <person name="Okamoto T."/>
            <person name="Takanami M."/>
        </authorList>
    </citation>
    <scope>NUCLEOTIDE SEQUENCE [GENOMIC DNA]</scope>
    <source>
        <strain>478 / Heidelberg</strain>
    </source>
</reference>
<reference key="2">
    <citation type="journal article" date="1980" name="J. Biol. Chem.">
        <title>Isolation and characterization of the C and D proteins coded by gene IX and gene VI in the filamentous bacteriophage f1 and fd.</title>
        <authorList>
            <person name="Lin T.-C."/>
            <person name="Webster R.E."/>
            <person name="Konigsberg W."/>
        </authorList>
    </citation>
    <scope>IDENTIFICATION OF PROTEIN</scope>
</reference>
<gene>
    <name type="primary">VI</name>
</gene>
<dbReference type="EMBL" id="J02451">
    <property type="protein sequence ID" value="AAA32310.1"/>
    <property type="molecule type" value="Genomic_DNA"/>
</dbReference>
<dbReference type="PIR" id="A04275">
    <property type="entry name" value="Z6BPFD"/>
</dbReference>
<dbReference type="SMR" id="P69530"/>
<dbReference type="KEGG" id="vg:22475005"/>
<dbReference type="Proteomes" id="UP000001836">
    <property type="component" value="Genome"/>
</dbReference>
<dbReference type="GO" id="GO:0033644">
    <property type="term" value="C:host cell membrane"/>
    <property type="evidence" value="ECO:0007669"/>
    <property type="project" value="UniProtKB-SubCell"/>
</dbReference>
<dbReference type="GO" id="GO:0016020">
    <property type="term" value="C:membrane"/>
    <property type="evidence" value="ECO:0007669"/>
    <property type="project" value="UniProtKB-KW"/>
</dbReference>
<dbReference type="GO" id="GO:0044423">
    <property type="term" value="C:virion component"/>
    <property type="evidence" value="ECO:0007669"/>
    <property type="project" value="UniProtKB-KW"/>
</dbReference>
<dbReference type="GO" id="GO:0046718">
    <property type="term" value="P:symbiont entry into host cell"/>
    <property type="evidence" value="ECO:0007669"/>
    <property type="project" value="UniProtKB-KW"/>
</dbReference>
<dbReference type="InterPro" id="IPR035210">
    <property type="entry name" value="DUF5455"/>
</dbReference>
<dbReference type="Pfam" id="PF17537">
    <property type="entry name" value="DUF5455"/>
    <property type="match status" value="1"/>
</dbReference>
<sequence>MPVLLGIPLLLRFLGFLLVTLFGYLLTFLKKGFGKIAIAISLFLALIIGLNSILVGYLSDISAQLPSDFVQGVQLILPSNALPCFYVILSVKAAIFIFDVKQKIVSYLDWDK</sequence>
<comment type="function">
    <text evidence="1">Plays essential roles both in the entry of the viral genome into the bacterial host and in budding process. The formation of the G3P-G6P complex termed adsorption complex is essential for correct termination of filamentous phage assembly (By similarity).</text>
</comment>
<comment type="subunit">
    <text evidence="1">Interacts with G3P; this interaction is required for proper integration of G3P and G6P into the virion.</text>
</comment>
<comment type="subcellular location">
    <subcellularLocation>
        <location evidence="3">Virion</location>
    </subcellularLocation>
    <subcellularLocation>
        <location evidence="3">Host membrane</location>
        <topology evidence="3">Multi-pass membrane protein</topology>
    </subcellularLocation>
    <text evidence="1">Prior to assembly, G6P is found associated with the bacterial host inner membrane. There are about five copies of G6P in the mature virion. They are located together with G3P at the head side of the filamentous virion (By similarity).</text>
</comment>
<comment type="similarity">
    <text evidence="3">Belongs to the inovirus G6P protein family.</text>
</comment>
<accession>P69530</accession>
<accession>P03673</accession>
<organismHost>
    <name type="scientific">Escherichia coli</name>
    <dbReference type="NCBI Taxonomy" id="562"/>
</organismHost>
<evidence type="ECO:0000250" key="1"/>
<evidence type="ECO:0000255" key="2"/>
<evidence type="ECO:0000305" key="3"/>
<organism>
    <name type="scientific">Enterobacteria phage fd</name>
    <name type="common">Bacteriophage fd</name>
    <dbReference type="NCBI Taxonomy" id="2847073"/>
    <lineage>
        <taxon>Viruses</taxon>
        <taxon>Monodnaviria</taxon>
        <taxon>Loebvirae</taxon>
        <taxon>Hofneiviricota</taxon>
        <taxon>Faserviricetes</taxon>
        <taxon>Tubulavirales</taxon>
        <taxon>Inoviridae</taxon>
        <taxon>Inovirus</taxon>
        <taxon>Enterobacteria phage M13</taxon>
    </lineage>
</organism>
<name>G6P_BPFD</name>
<keyword id="KW-1043">Host membrane</keyword>
<keyword id="KW-0472">Membrane</keyword>
<keyword id="KW-0812">Transmembrane</keyword>
<keyword id="KW-1133">Transmembrane helix</keyword>
<keyword id="KW-1162">Viral penetration into host cytoplasm</keyword>
<keyword id="KW-1241">Viral penetration into host cytoplasm via pilus retraction</keyword>
<keyword id="KW-0946">Virion</keyword>
<keyword id="KW-1160">Virus entry into host cell</keyword>